<proteinExistence type="inferred from homology"/>
<name>HIS3_CAUVN</name>
<protein>
    <recommendedName>
        <fullName evidence="1">Phosphoribosyl-AMP cyclohydrolase</fullName>
        <shortName evidence="1">PRA-CH</shortName>
        <ecNumber evidence="1">3.5.4.19</ecNumber>
    </recommendedName>
</protein>
<organism>
    <name type="scientific">Caulobacter vibrioides (strain NA1000 / CB15N)</name>
    <name type="common">Caulobacter crescentus</name>
    <dbReference type="NCBI Taxonomy" id="565050"/>
    <lineage>
        <taxon>Bacteria</taxon>
        <taxon>Pseudomonadati</taxon>
        <taxon>Pseudomonadota</taxon>
        <taxon>Alphaproteobacteria</taxon>
        <taxon>Caulobacterales</taxon>
        <taxon>Caulobacteraceae</taxon>
        <taxon>Caulobacter</taxon>
    </lineage>
</organism>
<sequence>MSTDLFPQAHSKHDLERGFALAPRFNADGLVVAVAQHADTGEILMLAWMNAEALKLTVETQIAHYFSRSRNELWKKGDTSGQLQDVVELRVDCDQDAVLLKVRPRGDGGACHVGFRSCFYRVLENGVLVEREAPLHDHA</sequence>
<dbReference type="EC" id="3.5.4.19" evidence="1"/>
<dbReference type="EMBL" id="CP001340">
    <property type="protein sequence ID" value="ACL93954.1"/>
    <property type="molecule type" value="Genomic_DNA"/>
</dbReference>
<dbReference type="RefSeq" id="WP_010918345.1">
    <property type="nucleotide sequence ID" value="NC_011916.1"/>
</dbReference>
<dbReference type="RefSeq" id="YP_002515862.1">
    <property type="nucleotide sequence ID" value="NC_011916.1"/>
</dbReference>
<dbReference type="SMR" id="B8GZS0"/>
<dbReference type="GeneID" id="7330617"/>
<dbReference type="KEGG" id="ccs:CCNA_00489"/>
<dbReference type="PATRIC" id="fig|565050.3.peg.480"/>
<dbReference type="HOGENOM" id="CLU_048577_5_0_5"/>
<dbReference type="OrthoDB" id="9795769at2"/>
<dbReference type="PhylomeDB" id="B8GZS0"/>
<dbReference type="UniPathway" id="UPA00031">
    <property type="reaction ID" value="UER00008"/>
</dbReference>
<dbReference type="Proteomes" id="UP000001364">
    <property type="component" value="Chromosome"/>
</dbReference>
<dbReference type="GO" id="GO:0005737">
    <property type="term" value="C:cytoplasm"/>
    <property type="evidence" value="ECO:0007669"/>
    <property type="project" value="UniProtKB-SubCell"/>
</dbReference>
<dbReference type="GO" id="GO:0000287">
    <property type="term" value="F:magnesium ion binding"/>
    <property type="evidence" value="ECO:0007669"/>
    <property type="project" value="UniProtKB-UniRule"/>
</dbReference>
<dbReference type="GO" id="GO:0004635">
    <property type="term" value="F:phosphoribosyl-AMP cyclohydrolase activity"/>
    <property type="evidence" value="ECO:0007669"/>
    <property type="project" value="UniProtKB-UniRule"/>
</dbReference>
<dbReference type="GO" id="GO:0008270">
    <property type="term" value="F:zinc ion binding"/>
    <property type="evidence" value="ECO:0007669"/>
    <property type="project" value="UniProtKB-UniRule"/>
</dbReference>
<dbReference type="GO" id="GO:0000105">
    <property type="term" value="P:L-histidine biosynthetic process"/>
    <property type="evidence" value="ECO:0007669"/>
    <property type="project" value="UniProtKB-UniRule"/>
</dbReference>
<dbReference type="FunFam" id="3.10.20.810:FF:000001">
    <property type="entry name" value="Histidine biosynthesis bifunctional protein HisIE"/>
    <property type="match status" value="1"/>
</dbReference>
<dbReference type="Gene3D" id="3.10.20.810">
    <property type="entry name" value="Phosphoribosyl-AMP cyclohydrolase"/>
    <property type="match status" value="1"/>
</dbReference>
<dbReference type="HAMAP" id="MF_01021">
    <property type="entry name" value="HisI"/>
    <property type="match status" value="1"/>
</dbReference>
<dbReference type="InterPro" id="IPR026660">
    <property type="entry name" value="PRA-CH"/>
</dbReference>
<dbReference type="InterPro" id="IPR002496">
    <property type="entry name" value="PRib_AMP_CycHydrolase_dom"/>
</dbReference>
<dbReference type="InterPro" id="IPR038019">
    <property type="entry name" value="PRib_AMP_CycHydrolase_sf"/>
</dbReference>
<dbReference type="NCBIfam" id="NF000768">
    <property type="entry name" value="PRK00051.1"/>
    <property type="match status" value="1"/>
</dbReference>
<dbReference type="PANTHER" id="PTHR42945">
    <property type="entry name" value="HISTIDINE BIOSYNTHESIS BIFUNCTIONAL PROTEIN"/>
    <property type="match status" value="1"/>
</dbReference>
<dbReference type="PANTHER" id="PTHR42945:SF1">
    <property type="entry name" value="HISTIDINE BIOSYNTHESIS BIFUNCTIONAL PROTEIN HIS7"/>
    <property type="match status" value="1"/>
</dbReference>
<dbReference type="Pfam" id="PF01502">
    <property type="entry name" value="PRA-CH"/>
    <property type="match status" value="1"/>
</dbReference>
<dbReference type="SUPFAM" id="SSF141734">
    <property type="entry name" value="HisI-like"/>
    <property type="match status" value="1"/>
</dbReference>
<gene>
    <name evidence="1" type="primary">hisI</name>
    <name type="ordered locus">CCNA_00489</name>
</gene>
<reference key="1">
    <citation type="journal article" date="2010" name="J. Bacteriol.">
        <title>The genetic basis of laboratory adaptation in Caulobacter crescentus.</title>
        <authorList>
            <person name="Marks M.E."/>
            <person name="Castro-Rojas C.M."/>
            <person name="Teiling C."/>
            <person name="Du L."/>
            <person name="Kapatral V."/>
            <person name="Walunas T.L."/>
            <person name="Crosson S."/>
        </authorList>
    </citation>
    <scope>NUCLEOTIDE SEQUENCE [LARGE SCALE GENOMIC DNA]</scope>
    <source>
        <strain>NA1000 / CB15N</strain>
    </source>
</reference>
<accession>B8GZS0</accession>
<feature type="chain" id="PRO_1000149067" description="Phosphoribosyl-AMP cyclohydrolase">
    <location>
        <begin position="1"/>
        <end position="139"/>
    </location>
</feature>
<feature type="binding site" evidence="1">
    <location>
        <position position="92"/>
    </location>
    <ligand>
        <name>Mg(2+)</name>
        <dbReference type="ChEBI" id="CHEBI:18420"/>
    </ligand>
</feature>
<feature type="binding site" evidence="1">
    <location>
        <position position="93"/>
    </location>
    <ligand>
        <name>Zn(2+)</name>
        <dbReference type="ChEBI" id="CHEBI:29105"/>
        <note>ligand shared between dimeric partners</note>
    </ligand>
</feature>
<feature type="binding site" evidence="1">
    <location>
        <position position="94"/>
    </location>
    <ligand>
        <name>Mg(2+)</name>
        <dbReference type="ChEBI" id="CHEBI:18420"/>
    </ligand>
</feature>
<feature type="binding site" evidence="1">
    <location>
        <position position="96"/>
    </location>
    <ligand>
        <name>Mg(2+)</name>
        <dbReference type="ChEBI" id="CHEBI:18420"/>
    </ligand>
</feature>
<feature type="binding site" evidence="1">
    <location>
        <position position="111"/>
    </location>
    <ligand>
        <name>Zn(2+)</name>
        <dbReference type="ChEBI" id="CHEBI:29105"/>
        <note>ligand shared between dimeric partners</note>
    </ligand>
</feature>
<feature type="binding site" evidence="1">
    <location>
        <position position="118"/>
    </location>
    <ligand>
        <name>Zn(2+)</name>
        <dbReference type="ChEBI" id="CHEBI:29105"/>
        <note>ligand shared between dimeric partners</note>
    </ligand>
</feature>
<evidence type="ECO:0000255" key="1">
    <source>
        <dbReference type="HAMAP-Rule" id="MF_01021"/>
    </source>
</evidence>
<keyword id="KW-0028">Amino-acid biosynthesis</keyword>
<keyword id="KW-0963">Cytoplasm</keyword>
<keyword id="KW-0368">Histidine biosynthesis</keyword>
<keyword id="KW-0378">Hydrolase</keyword>
<keyword id="KW-0460">Magnesium</keyword>
<keyword id="KW-0479">Metal-binding</keyword>
<keyword id="KW-1185">Reference proteome</keyword>
<keyword id="KW-0862">Zinc</keyword>
<comment type="function">
    <text evidence="1">Catalyzes the hydrolysis of the adenine ring of phosphoribosyl-AMP.</text>
</comment>
<comment type="catalytic activity">
    <reaction evidence="1">
        <text>1-(5-phospho-beta-D-ribosyl)-5'-AMP + H2O = 1-(5-phospho-beta-D-ribosyl)-5-[(5-phospho-beta-D-ribosylamino)methylideneamino]imidazole-4-carboxamide</text>
        <dbReference type="Rhea" id="RHEA:20049"/>
        <dbReference type="ChEBI" id="CHEBI:15377"/>
        <dbReference type="ChEBI" id="CHEBI:58435"/>
        <dbReference type="ChEBI" id="CHEBI:59457"/>
        <dbReference type="EC" id="3.5.4.19"/>
    </reaction>
</comment>
<comment type="cofactor">
    <cofactor evidence="1">
        <name>Mg(2+)</name>
        <dbReference type="ChEBI" id="CHEBI:18420"/>
    </cofactor>
    <text evidence="1">Binds 1 Mg(2+) ion per subunit.</text>
</comment>
<comment type="cofactor">
    <cofactor evidence="1">
        <name>Zn(2+)</name>
        <dbReference type="ChEBI" id="CHEBI:29105"/>
    </cofactor>
    <text evidence="1">Binds 1 zinc ion per subunit.</text>
</comment>
<comment type="pathway">
    <text evidence="1">Amino-acid biosynthesis; L-histidine biosynthesis; L-histidine from 5-phospho-alpha-D-ribose 1-diphosphate: step 3/9.</text>
</comment>
<comment type="subunit">
    <text evidence="1">Homodimer.</text>
</comment>
<comment type="subcellular location">
    <subcellularLocation>
        <location evidence="1">Cytoplasm</location>
    </subcellularLocation>
</comment>
<comment type="similarity">
    <text evidence="1">Belongs to the PRA-CH family.</text>
</comment>